<reference key="1">
    <citation type="journal article" date="1996" name="Gene">
        <title>Isolation and sequence analysis of Clpg1, a gene coding for an endopolygalacturonase of the phytopathogenic fungus Colletotrichum lindemuthianum.</title>
        <authorList>
            <person name="Centis S."/>
            <person name="Dumas B."/>
            <person name="Fournier J."/>
            <person name="Marolda M."/>
            <person name="Esquerre-Tugaye M.T."/>
        </authorList>
    </citation>
    <scope>NUCLEOTIDE SEQUENCE [GENOMIC DNA]</scope>
</reference>
<keyword id="KW-0961">Cell wall biogenesis/degradation</keyword>
<keyword id="KW-1015">Disulfide bond</keyword>
<keyword id="KW-0325">Glycoprotein</keyword>
<keyword id="KW-0326">Glycosidase</keyword>
<keyword id="KW-0378">Hydrolase</keyword>
<keyword id="KW-0677">Repeat</keyword>
<keyword id="KW-0964">Secreted</keyword>
<keyword id="KW-0732">Signal</keyword>
<keyword id="KW-0865">Zymogen</keyword>
<accession>Q00446</accession>
<comment type="function">
    <text>Involved in maceration and soft-rotting of plant tissue. Hydrolyzes the 1,4-alpha glycosidic bonds of de-esterified pectate in the smooth region of the plant cell wall.</text>
</comment>
<comment type="catalytic activity">
    <reaction>
        <text>(1,4-alpha-D-galacturonosyl)n+m + H2O = (1,4-alpha-D-galacturonosyl)n + (1,4-alpha-D-galacturonosyl)m.</text>
        <dbReference type="EC" id="3.2.1.15"/>
    </reaction>
</comment>
<comment type="subcellular location">
    <subcellularLocation>
        <location>Secreted</location>
    </subcellularLocation>
</comment>
<comment type="similarity">
    <text evidence="5">Belongs to the glycosyl hydrolase 28 family.</text>
</comment>
<name>PGLR1_COLLN</name>
<sequence>MVSYLFVLGALASVAIASPVPELKARASCTFTDAASAIKGKASCTTIVLNNIAVPAGTTLDMTGLKSGTHVSFSGKTTFGYKEWEGPLISFSGSNVVIDGASGHSIDCQGSRWWDSKGGNGGKTKPKFFYAHSLKDSTIRGLHTLNTPVQAFSINGAANLGVYDVSVDNSAGDSAGGHNTDAFDVGSSTGVYISGADVKNQDDCLAVNSGTNITFTGGTCSGGHGLSIGSVGGRKDNVVKSVSITNSKIINSDNGVRIKTVAGATGPVSDITYSGITLSNIAKYGIVIEQDYENGSPTGKPTSGVPISGLTLSKISGSVSSSATPVYILCASCTNWKWSGVSVTGGKKSSKCTGIPSGSGAAC</sequence>
<proteinExistence type="inferred from homology"/>
<evidence type="ECO:0000250" key="1">
    <source>
        <dbReference type="UniProtKB" id="O74213"/>
    </source>
</evidence>
<evidence type="ECO:0000255" key="2"/>
<evidence type="ECO:0000255" key="3">
    <source>
        <dbReference type="PROSITE-ProRule" id="PRU00498"/>
    </source>
</evidence>
<evidence type="ECO:0000255" key="4">
    <source>
        <dbReference type="PROSITE-ProRule" id="PRU10052"/>
    </source>
</evidence>
<evidence type="ECO:0000305" key="5"/>
<gene>
    <name type="primary">PG1</name>
</gene>
<dbReference type="EC" id="3.2.1.15"/>
<dbReference type="EMBL" id="X89370">
    <property type="protein sequence ID" value="CAA61552.1"/>
    <property type="molecule type" value="Genomic_DNA"/>
</dbReference>
<dbReference type="PIR" id="JC4748">
    <property type="entry name" value="JC4748"/>
</dbReference>
<dbReference type="SMR" id="Q00446"/>
<dbReference type="CAZy" id="GH28">
    <property type="family name" value="Glycoside Hydrolase Family 28"/>
</dbReference>
<dbReference type="GlyCosmos" id="Q00446">
    <property type="glycosylation" value="1 site, No reported glycans"/>
</dbReference>
<dbReference type="GO" id="GO:0005576">
    <property type="term" value="C:extracellular region"/>
    <property type="evidence" value="ECO:0007669"/>
    <property type="project" value="UniProtKB-SubCell"/>
</dbReference>
<dbReference type="GO" id="GO:0004650">
    <property type="term" value="F:polygalacturonase activity"/>
    <property type="evidence" value="ECO:0007669"/>
    <property type="project" value="UniProtKB-EC"/>
</dbReference>
<dbReference type="GO" id="GO:0071555">
    <property type="term" value="P:cell wall organization"/>
    <property type="evidence" value="ECO:0007669"/>
    <property type="project" value="UniProtKB-KW"/>
</dbReference>
<dbReference type="GO" id="GO:0045490">
    <property type="term" value="P:pectin catabolic process"/>
    <property type="evidence" value="ECO:0007669"/>
    <property type="project" value="TreeGrafter"/>
</dbReference>
<dbReference type="FunFam" id="2.160.20.10:FF:000002">
    <property type="entry name" value="Endopolygalacturonase D"/>
    <property type="match status" value="1"/>
</dbReference>
<dbReference type="Gene3D" id="2.160.20.10">
    <property type="entry name" value="Single-stranded right-handed beta-helix, Pectin lyase-like"/>
    <property type="match status" value="1"/>
</dbReference>
<dbReference type="InterPro" id="IPR000743">
    <property type="entry name" value="Glyco_hydro_28"/>
</dbReference>
<dbReference type="InterPro" id="IPR050434">
    <property type="entry name" value="Glycosyl_hydrlase_28"/>
</dbReference>
<dbReference type="InterPro" id="IPR006626">
    <property type="entry name" value="PbH1"/>
</dbReference>
<dbReference type="InterPro" id="IPR012334">
    <property type="entry name" value="Pectin_lyas_fold"/>
</dbReference>
<dbReference type="InterPro" id="IPR011050">
    <property type="entry name" value="Pectin_lyase_fold/virulence"/>
</dbReference>
<dbReference type="PANTHER" id="PTHR31884">
    <property type="entry name" value="POLYGALACTURONASE"/>
    <property type="match status" value="1"/>
</dbReference>
<dbReference type="PANTHER" id="PTHR31884:SF1">
    <property type="entry name" value="POLYGALACTURONASE"/>
    <property type="match status" value="1"/>
</dbReference>
<dbReference type="Pfam" id="PF00295">
    <property type="entry name" value="Glyco_hydro_28"/>
    <property type="match status" value="1"/>
</dbReference>
<dbReference type="SMART" id="SM00710">
    <property type="entry name" value="PbH1"/>
    <property type="match status" value="4"/>
</dbReference>
<dbReference type="SUPFAM" id="SSF51126">
    <property type="entry name" value="Pectin lyase-like"/>
    <property type="match status" value="1"/>
</dbReference>
<dbReference type="PROSITE" id="PS00502">
    <property type="entry name" value="POLYGALACTURONASE"/>
    <property type="match status" value="1"/>
</dbReference>
<protein>
    <recommendedName>
        <fullName>Endopolygalacturonase 1</fullName>
        <ecNumber>3.2.1.15</ecNumber>
    </recommendedName>
    <alternativeName>
        <fullName>Clpg1</fullName>
    </alternativeName>
    <alternativeName>
        <fullName>Pectinase</fullName>
    </alternativeName>
</protein>
<feature type="signal peptide" evidence="2">
    <location>
        <begin position="1"/>
        <end position="17"/>
    </location>
</feature>
<feature type="propeptide" id="PRO_0000024784" evidence="2">
    <location>
        <begin position="18"/>
        <end position="26"/>
    </location>
</feature>
<feature type="chain" id="PRO_0000024785" description="Endopolygalacturonase 1">
    <location>
        <begin position="27"/>
        <end position="363"/>
    </location>
</feature>
<feature type="repeat" description="PbH1 1" evidence="2">
    <location>
        <begin position="188"/>
        <end position="209"/>
    </location>
</feature>
<feature type="repeat" description="PbH1 2" evidence="2">
    <location>
        <begin position="210"/>
        <end position="230"/>
    </location>
</feature>
<feature type="repeat" description="PbH1 3" evidence="2">
    <location>
        <begin position="239"/>
        <end position="260"/>
    </location>
</feature>
<feature type="repeat" description="PbH1 4" evidence="2">
    <location>
        <begin position="268"/>
        <end position="290"/>
    </location>
</feature>
<feature type="active site" description="Proton donor" evidence="1">
    <location>
        <position position="202"/>
    </location>
</feature>
<feature type="active site" evidence="4">
    <location>
        <position position="224"/>
    </location>
</feature>
<feature type="glycosylation site" description="N-linked (GlcNAc...) asparagine" evidence="3">
    <location>
        <position position="212"/>
    </location>
</feature>
<feature type="disulfide bond" evidence="1">
    <location>
        <begin position="29"/>
        <end position="44"/>
    </location>
</feature>
<feature type="disulfide bond" evidence="1">
    <location>
        <begin position="204"/>
        <end position="220"/>
    </location>
</feature>
<feature type="disulfide bond" evidence="1">
    <location>
        <begin position="330"/>
        <end position="333"/>
    </location>
</feature>
<feature type="disulfide bond" evidence="1">
    <location>
        <begin position="352"/>
        <end position="363"/>
    </location>
</feature>
<organism>
    <name type="scientific">Colletotrichum lindemuthianum</name>
    <name type="common">Bean anthracnose fungus</name>
    <name type="synonym">Glomerella lindemuthiana</name>
    <dbReference type="NCBI Taxonomy" id="290576"/>
    <lineage>
        <taxon>Eukaryota</taxon>
        <taxon>Fungi</taxon>
        <taxon>Dikarya</taxon>
        <taxon>Ascomycota</taxon>
        <taxon>Pezizomycotina</taxon>
        <taxon>Sordariomycetes</taxon>
        <taxon>Hypocreomycetidae</taxon>
        <taxon>Glomerellales</taxon>
        <taxon>Glomerellaceae</taxon>
        <taxon>Colletotrichum</taxon>
        <taxon>Colletotrichum orbiculare species complex</taxon>
    </lineage>
</organism>